<comment type="function">
    <text evidence="1">Part of the ABC transporter complex LolCDE involved in the translocation of mature outer membrane-directed lipoproteins, from the inner membrane to the periplasmic chaperone, LolA. Responsible for the formation of the LolA-lipoprotein complex in an ATP-dependent manner.</text>
</comment>
<comment type="subunit">
    <text evidence="1">The complex is composed of two ATP-binding proteins (LolD) and two transmembrane proteins (LolC and LolE).</text>
</comment>
<comment type="subcellular location">
    <subcellularLocation>
        <location evidence="1">Cell inner membrane</location>
        <topology evidence="1">Peripheral membrane protein</topology>
    </subcellularLocation>
</comment>
<comment type="similarity">
    <text evidence="1">Belongs to the ABC transporter superfamily. Lipoprotein translocase (TC 3.A.1.125) family.</text>
</comment>
<dbReference type="EC" id="7.6.2.-" evidence="1"/>
<dbReference type="EMBL" id="AP006841">
    <property type="protein sequence ID" value="BAD47196.1"/>
    <property type="molecule type" value="Genomic_DNA"/>
</dbReference>
<dbReference type="RefSeq" id="WP_011202004.1">
    <property type="nucleotide sequence ID" value="NC_006347.1"/>
</dbReference>
<dbReference type="RefSeq" id="YP_097730.1">
    <property type="nucleotide sequence ID" value="NC_006347.1"/>
</dbReference>
<dbReference type="SMR" id="Q64Z80"/>
<dbReference type="STRING" id="295405.BF0447"/>
<dbReference type="KEGG" id="bfr:BF0447"/>
<dbReference type="PATRIC" id="fig|295405.11.peg.464"/>
<dbReference type="HOGENOM" id="CLU_000604_1_22_10"/>
<dbReference type="OrthoDB" id="9782239at2"/>
<dbReference type="Proteomes" id="UP000002197">
    <property type="component" value="Chromosome"/>
</dbReference>
<dbReference type="GO" id="GO:0005886">
    <property type="term" value="C:plasma membrane"/>
    <property type="evidence" value="ECO:0007669"/>
    <property type="project" value="UniProtKB-SubCell"/>
</dbReference>
<dbReference type="GO" id="GO:0005524">
    <property type="term" value="F:ATP binding"/>
    <property type="evidence" value="ECO:0007669"/>
    <property type="project" value="UniProtKB-KW"/>
</dbReference>
<dbReference type="GO" id="GO:0016887">
    <property type="term" value="F:ATP hydrolysis activity"/>
    <property type="evidence" value="ECO:0007669"/>
    <property type="project" value="InterPro"/>
</dbReference>
<dbReference type="CDD" id="cd03255">
    <property type="entry name" value="ABC_MJ0796_LolCDE_FtsE"/>
    <property type="match status" value="1"/>
</dbReference>
<dbReference type="FunFam" id="3.40.50.300:FF:000230">
    <property type="entry name" value="Lipoprotein-releasing system ATP-binding protein LolD"/>
    <property type="match status" value="1"/>
</dbReference>
<dbReference type="Gene3D" id="3.40.50.300">
    <property type="entry name" value="P-loop containing nucleotide triphosphate hydrolases"/>
    <property type="match status" value="1"/>
</dbReference>
<dbReference type="InterPro" id="IPR003593">
    <property type="entry name" value="AAA+_ATPase"/>
</dbReference>
<dbReference type="InterPro" id="IPR003439">
    <property type="entry name" value="ABC_transporter-like_ATP-bd"/>
</dbReference>
<dbReference type="InterPro" id="IPR017871">
    <property type="entry name" value="ABC_transporter-like_CS"/>
</dbReference>
<dbReference type="InterPro" id="IPR017911">
    <property type="entry name" value="MacB-like_ATP-bd"/>
</dbReference>
<dbReference type="InterPro" id="IPR027417">
    <property type="entry name" value="P-loop_NTPase"/>
</dbReference>
<dbReference type="PANTHER" id="PTHR42798:SF7">
    <property type="entry name" value="ALPHA-D-RIBOSE 1-METHYLPHOSPHONATE 5-TRIPHOSPHATE SYNTHASE SUBUNIT PHNL"/>
    <property type="match status" value="1"/>
</dbReference>
<dbReference type="PANTHER" id="PTHR42798">
    <property type="entry name" value="LIPOPROTEIN-RELEASING SYSTEM ATP-BINDING PROTEIN LOLD"/>
    <property type="match status" value="1"/>
</dbReference>
<dbReference type="Pfam" id="PF00005">
    <property type="entry name" value="ABC_tran"/>
    <property type="match status" value="1"/>
</dbReference>
<dbReference type="SMART" id="SM00382">
    <property type="entry name" value="AAA"/>
    <property type="match status" value="1"/>
</dbReference>
<dbReference type="SUPFAM" id="SSF52540">
    <property type="entry name" value="P-loop containing nucleoside triphosphate hydrolases"/>
    <property type="match status" value="1"/>
</dbReference>
<dbReference type="PROSITE" id="PS00211">
    <property type="entry name" value="ABC_TRANSPORTER_1"/>
    <property type="match status" value="1"/>
</dbReference>
<dbReference type="PROSITE" id="PS50893">
    <property type="entry name" value="ABC_TRANSPORTER_2"/>
    <property type="match status" value="1"/>
</dbReference>
<dbReference type="PROSITE" id="PS51244">
    <property type="entry name" value="LOLD"/>
    <property type="match status" value="1"/>
</dbReference>
<name>LOLD_BACFR</name>
<reference key="1">
    <citation type="journal article" date="2004" name="Proc. Natl. Acad. Sci. U.S.A.">
        <title>Genomic analysis of Bacteroides fragilis reveals extensive DNA inversions regulating cell surface adaptation.</title>
        <authorList>
            <person name="Kuwahara T."/>
            <person name="Yamashita A."/>
            <person name="Hirakawa H."/>
            <person name="Nakayama H."/>
            <person name="Toh H."/>
            <person name="Okada N."/>
            <person name="Kuhara S."/>
            <person name="Hattori M."/>
            <person name="Hayashi T."/>
            <person name="Ohnishi Y."/>
        </authorList>
    </citation>
    <scope>NUCLEOTIDE SEQUENCE [LARGE SCALE GENOMIC DNA]</scope>
    <source>
        <strain>YCH46</strain>
    </source>
</reference>
<keyword id="KW-0067">ATP-binding</keyword>
<keyword id="KW-0997">Cell inner membrane</keyword>
<keyword id="KW-1003">Cell membrane</keyword>
<keyword id="KW-0472">Membrane</keyword>
<keyword id="KW-0547">Nucleotide-binding</keyword>
<keyword id="KW-1278">Translocase</keyword>
<keyword id="KW-0813">Transport</keyword>
<accession>Q64Z80</accession>
<feature type="chain" id="PRO_0000272056" description="Lipoprotein-releasing system ATP-binding protein LolD">
    <location>
        <begin position="1"/>
        <end position="216"/>
    </location>
</feature>
<feature type="domain" description="ABC transporter" evidence="1">
    <location>
        <begin position="2"/>
        <end position="216"/>
    </location>
</feature>
<feature type="binding site" evidence="1">
    <location>
        <begin position="34"/>
        <end position="41"/>
    </location>
    <ligand>
        <name>ATP</name>
        <dbReference type="ChEBI" id="CHEBI:30616"/>
    </ligand>
</feature>
<protein>
    <recommendedName>
        <fullName evidence="1">Lipoprotein-releasing system ATP-binding protein LolD</fullName>
        <ecNumber evidence="1">7.6.2.-</ecNumber>
    </recommendedName>
</protein>
<evidence type="ECO:0000255" key="1">
    <source>
        <dbReference type="HAMAP-Rule" id="MF_01708"/>
    </source>
</evidence>
<gene>
    <name evidence="1" type="primary">lolD</name>
    <name type="ordered locus">BF0447</name>
</gene>
<proteinExistence type="inferred from homology"/>
<sequence>MIHLEGITKSFGSLQVLKGIDLEITQGEVVSIVGPSGAGKTTLLQIMGTLDSPDTGMINIDGTNVSRMKEKELSAFRNKHIGFVFQFHQLLPEFTALENVMIPAFIAGVPTKEASMRAMEILDFMGLKERASHKPNELSGGEKQRVAVARALINQPAVILADEPSGSLDSHNKEELHQLFFDLRNRFGQTFVIVTHDEALAKITDRTIHMVDGNII</sequence>
<organism>
    <name type="scientific">Bacteroides fragilis (strain YCH46)</name>
    <dbReference type="NCBI Taxonomy" id="295405"/>
    <lineage>
        <taxon>Bacteria</taxon>
        <taxon>Pseudomonadati</taxon>
        <taxon>Bacteroidota</taxon>
        <taxon>Bacteroidia</taxon>
        <taxon>Bacteroidales</taxon>
        <taxon>Bacteroidaceae</taxon>
        <taxon>Bacteroides</taxon>
    </lineage>
</organism>